<accession>C4KH07</accession>
<organism>
    <name type="scientific">Saccharolobus islandicus (strain M.16.4 / Kamchatka #3)</name>
    <name type="common">Sulfolobus islandicus</name>
    <dbReference type="NCBI Taxonomy" id="426118"/>
    <lineage>
        <taxon>Archaea</taxon>
        <taxon>Thermoproteota</taxon>
        <taxon>Thermoprotei</taxon>
        <taxon>Sulfolobales</taxon>
        <taxon>Sulfolobaceae</taxon>
        <taxon>Saccharolobus</taxon>
    </lineage>
</organism>
<gene>
    <name evidence="1" type="primary">trm1</name>
    <name type="ordered locus">M164_1267</name>
</gene>
<protein>
    <recommendedName>
        <fullName evidence="1">tRNA (guanine(26)-N(2))-dimethyltransferase</fullName>
        <ecNumber evidence="1">2.1.1.216</ecNumber>
    </recommendedName>
    <alternativeName>
        <fullName evidence="1">tRNA 2,2-dimethylguanosine-26 methyltransferase</fullName>
    </alternativeName>
    <alternativeName>
        <fullName evidence="1">tRNA(guanine-26,N(2)-N(2)) methyltransferase</fullName>
    </alternativeName>
    <alternativeName>
        <fullName evidence="1">tRNA(m(2,2)G26)dimethyltransferase</fullName>
    </alternativeName>
</protein>
<reference key="1">
    <citation type="journal article" date="2009" name="Proc. Natl. Acad. Sci. U.S.A.">
        <title>Biogeography of the Sulfolobus islandicus pan-genome.</title>
        <authorList>
            <person name="Reno M.L."/>
            <person name="Held N.L."/>
            <person name="Fields C.J."/>
            <person name="Burke P.V."/>
            <person name="Whitaker R.J."/>
        </authorList>
    </citation>
    <scope>NUCLEOTIDE SEQUENCE [LARGE SCALE GENOMIC DNA]</scope>
    <source>
        <strain>M.16.4 / Kamchatka #3</strain>
    </source>
</reference>
<proteinExistence type="inferred from homology"/>
<feature type="chain" id="PRO_1000204868" description="tRNA (guanine(26)-N(2))-dimethyltransferase">
    <location>
        <begin position="1"/>
        <end position="378"/>
    </location>
</feature>
<feature type="domain" description="Trm1 methyltransferase" evidence="1">
    <location>
        <begin position="4"/>
        <end position="374"/>
    </location>
</feature>
<feature type="binding site" evidence="1">
    <location>
        <position position="44"/>
    </location>
    <ligand>
        <name>S-adenosyl-L-methionine</name>
        <dbReference type="ChEBI" id="CHEBI:59789"/>
    </ligand>
</feature>
<feature type="binding site" evidence="1">
    <location>
        <position position="69"/>
    </location>
    <ligand>
        <name>S-adenosyl-L-methionine</name>
        <dbReference type="ChEBI" id="CHEBI:59789"/>
    </ligand>
</feature>
<feature type="binding site" evidence="1">
    <location>
        <position position="87"/>
    </location>
    <ligand>
        <name>S-adenosyl-L-methionine</name>
        <dbReference type="ChEBI" id="CHEBI:59789"/>
    </ligand>
</feature>
<feature type="binding site" evidence="1">
    <location>
        <position position="114"/>
    </location>
    <ligand>
        <name>S-adenosyl-L-methionine</name>
        <dbReference type="ChEBI" id="CHEBI:59789"/>
    </ligand>
</feature>
<feature type="binding site" evidence="1">
    <location>
        <position position="115"/>
    </location>
    <ligand>
        <name>S-adenosyl-L-methionine</name>
        <dbReference type="ChEBI" id="CHEBI:59789"/>
    </ligand>
</feature>
<feature type="binding site" evidence="1">
    <location>
        <position position="246"/>
    </location>
    <ligand>
        <name>Zn(2+)</name>
        <dbReference type="ChEBI" id="CHEBI:29105"/>
    </ligand>
</feature>
<feature type="binding site" evidence="1">
    <location>
        <position position="249"/>
    </location>
    <ligand>
        <name>Zn(2+)</name>
        <dbReference type="ChEBI" id="CHEBI:29105"/>
    </ligand>
</feature>
<feature type="binding site" evidence="1">
    <location>
        <position position="263"/>
    </location>
    <ligand>
        <name>Zn(2+)</name>
        <dbReference type="ChEBI" id="CHEBI:29105"/>
    </ligand>
</feature>
<feature type="binding site" evidence="1">
    <location>
        <position position="266"/>
    </location>
    <ligand>
        <name>Zn(2+)</name>
        <dbReference type="ChEBI" id="CHEBI:29105"/>
    </ligand>
</feature>
<sequence length="378" mass="42918">MKLKEVTEGKVRIFVPDPKEYMIEGKFDPSWAPVFYNPKMTFNRDLSVIVVSLLKPKIILDALSATGIRGIRYYVESWKSEQLILNDKNSTAASLIQINVKNNGIENAKIYNKDANALLYEIKSEYIDIDPFGSPVPFILSSINATIRNGIVAFTATDLSPLEGSSRTSCRRKYDAINYKLSSSKELGLRILIGKIIREAATLEKTVHPLFSFYADYYYRLFVIVESGARKADENINKNLKYFGECPRCGFQTFVDENCKTKCPICGENFIIIGPLYIGPLHNMEFLKRMIDTYSDFNYLSSFNRIQKLLNVIEKEAKYKSVFYNISKLASKLKVSAIPPIDSILECLGDASKTHFAPTGIRTDKGYEEIIRCVKSLR</sequence>
<name>TRM1_SACI6</name>
<comment type="function">
    <text evidence="1">Dimethylates a single guanine residue at position 26 of a number of tRNAs using S-adenosyl-L-methionine as donor of the methyl groups.</text>
</comment>
<comment type="catalytic activity">
    <reaction evidence="1">
        <text>guanosine(26) in tRNA + 2 S-adenosyl-L-methionine = N(2)-dimethylguanosine(26) in tRNA + 2 S-adenosyl-L-homocysteine + 2 H(+)</text>
        <dbReference type="Rhea" id="RHEA:43140"/>
        <dbReference type="Rhea" id="RHEA-COMP:10359"/>
        <dbReference type="Rhea" id="RHEA-COMP:10360"/>
        <dbReference type="ChEBI" id="CHEBI:15378"/>
        <dbReference type="ChEBI" id="CHEBI:57856"/>
        <dbReference type="ChEBI" id="CHEBI:59789"/>
        <dbReference type="ChEBI" id="CHEBI:74269"/>
        <dbReference type="ChEBI" id="CHEBI:74513"/>
        <dbReference type="EC" id="2.1.1.216"/>
    </reaction>
</comment>
<comment type="similarity">
    <text evidence="1">Belongs to the class I-like SAM-binding methyltransferase superfamily. Trm1 family.</text>
</comment>
<dbReference type="EC" id="2.1.1.216" evidence="1"/>
<dbReference type="EMBL" id="CP001402">
    <property type="protein sequence ID" value="ACR41871.1"/>
    <property type="molecule type" value="Genomic_DNA"/>
</dbReference>
<dbReference type="RefSeq" id="WP_012711290.1">
    <property type="nucleotide sequence ID" value="NC_012726.1"/>
</dbReference>
<dbReference type="SMR" id="C4KH07"/>
<dbReference type="GeneID" id="15297640"/>
<dbReference type="KEGG" id="sid:M164_1267"/>
<dbReference type="HOGENOM" id="CLU_010862_5_1_2"/>
<dbReference type="Proteomes" id="UP000001479">
    <property type="component" value="Chromosome"/>
</dbReference>
<dbReference type="GO" id="GO:0160104">
    <property type="term" value="F:tRNA (guanine(26)-N2)-dimethyltransferase activity"/>
    <property type="evidence" value="ECO:0007669"/>
    <property type="project" value="UniProtKB-UniRule"/>
</dbReference>
<dbReference type="GO" id="GO:0000049">
    <property type="term" value="F:tRNA binding"/>
    <property type="evidence" value="ECO:0007669"/>
    <property type="project" value="UniProtKB-KW"/>
</dbReference>
<dbReference type="GO" id="GO:0002940">
    <property type="term" value="P:tRNA N2-guanine methylation"/>
    <property type="evidence" value="ECO:0007669"/>
    <property type="project" value="TreeGrafter"/>
</dbReference>
<dbReference type="FunFam" id="3.40.50.150:FF:000272">
    <property type="entry name" value="tRNA (guanine(26)-N(2))-dimethyltransferase"/>
    <property type="match status" value="1"/>
</dbReference>
<dbReference type="Gene3D" id="3.30.56.70">
    <property type="entry name" value="N2,N2-dimethylguanosine tRNA methyltransferase, C-terminal domain"/>
    <property type="match status" value="1"/>
</dbReference>
<dbReference type="Gene3D" id="3.40.50.150">
    <property type="entry name" value="Vaccinia Virus protein VP39"/>
    <property type="match status" value="1"/>
</dbReference>
<dbReference type="HAMAP" id="MF_00290">
    <property type="entry name" value="tRNA_dimethyltr_TRM1"/>
    <property type="match status" value="1"/>
</dbReference>
<dbReference type="InterPro" id="IPR029063">
    <property type="entry name" value="SAM-dependent_MTases_sf"/>
</dbReference>
<dbReference type="InterPro" id="IPR002905">
    <property type="entry name" value="Trm1"/>
</dbReference>
<dbReference type="InterPro" id="IPR022923">
    <property type="entry name" value="TRM1_arc_bac"/>
</dbReference>
<dbReference type="InterPro" id="IPR042296">
    <property type="entry name" value="tRNA_met_Trm1_C"/>
</dbReference>
<dbReference type="NCBIfam" id="NF003331">
    <property type="entry name" value="PRK04338.1-7"/>
    <property type="match status" value="1"/>
</dbReference>
<dbReference type="NCBIfam" id="TIGR00308">
    <property type="entry name" value="TRM1"/>
    <property type="match status" value="1"/>
</dbReference>
<dbReference type="PANTHER" id="PTHR10631">
    <property type="entry name" value="N 2 ,N 2 -DIMETHYLGUANOSINE TRNA METHYLTRANSFERASE"/>
    <property type="match status" value="1"/>
</dbReference>
<dbReference type="PANTHER" id="PTHR10631:SF3">
    <property type="entry name" value="TRNA (GUANINE(26)-N(2))-DIMETHYLTRANSFERASE"/>
    <property type="match status" value="1"/>
</dbReference>
<dbReference type="Pfam" id="PF02005">
    <property type="entry name" value="TRM"/>
    <property type="match status" value="1"/>
</dbReference>
<dbReference type="SUPFAM" id="SSF53335">
    <property type="entry name" value="S-adenosyl-L-methionine-dependent methyltransferases"/>
    <property type="match status" value="1"/>
</dbReference>
<dbReference type="PROSITE" id="PS51626">
    <property type="entry name" value="SAM_MT_TRM1"/>
    <property type="match status" value="1"/>
</dbReference>
<keyword id="KW-0479">Metal-binding</keyword>
<keyword id="KW-0489">Methyltransferase</keyword>
<keyword id="KW-0694">RNA-binding</keyword>
<keyword id="KW-0949">S-adenosyl-L-methionine</keyword>
<keyword id="KW-0808">Transferase</keyword>
<keyword id="KW-0819">tRNA processing</keyword>
<keyword id="KW-0820">tRNA-binding</keyword>
<keyword id="KW-0862">Zinc</keyword>
<evidence type="ECO:0000255" key="1">
    <source>
        <dbReference type="HAMAP-Rule" id="MF_00290"/>
    </source>
</evidence>